<evidence type="ECO:0000255" key="1">
    <source>
        <dbReference type="HAMAP-Rule" id="MF_00034"/>
    </source>
</evidence>
<reference key="1">
    <citation type="submission" date="2008-02" db="EMBL/GenBank/DDBJ databases">
        <title>Complete sequence of chromosome 1 of Burkholderia cenocepacia MC0-3.</title>
        <authorList>
            <person name="Copeland A."/>
            <person name="Lucas S."/>
            <person name="Lapidus A."/>
            <person name="Barry K."/>
            <person name="Bruce D."/>
            <person name="Goodwin L."/>
            <person name="Glavina del Rio T."/>
            <person name="Dalin E."/>
            <person name="Tice H."/>
            <person name="Pitluck S."/>
            <person name="Chain P."/>
            <person name="Malfatti S."/>
            <person name="Shin M."/>
            <person name="Vergez L."/>
            <person name="Schmutz J."/>
            <person name="Larimer F."/>
            <person name="Land M."/>
            <person name="Hauser L."/>
            <person name="Kyrpides N."/>
            <person name="Mikhailova N."/>
            <person name="Tiedje J."/>
            <person name="Richardson P."/>
        </authorList>
    </citation>
    <scope>NUCLEOTIDE SEQUENCE [LARGE SCALE GENOMIC DNA]</scope>
    <source>
        <strain>MC0-3</strain>
    </source>
</reference>
<protein>
    <recommendedName>
        <fullName evidence="1">Crossover junction endodeoxyribonuclease RuvC</fullName>
        <ecNumber evidence="1">3.1.21.10</ecNumber>
    </recommendedName>
    <alternativeName>
        <fullName evidence="1">Holliday junction nuclease RuvC</fullName>
    </alternativeName>
    <alternativeName>
        <fullName evidence="1">Holliday junction resolvase RuvC</fullName>
    </alternativeName>
</protein>
<keyword id="KW-0963">Cytoplasm</keyword>
<keyword id="KW-0227">DNA damage</keyword>
<keyword id="KW-0233">DNA recombination</keyword>
<keyword id="KW-0234">DNA repair</keyword>
<keyword id="KW-0238">DNA-binding</keyword>
<keyword id="KW-0255">Endonuclease</keyword>
<keyword id="KW-0378">Hydrolase</keyword>
<keyword id="KW-0460">Magnesium</keyword>
<keyword id="KW-0479">Metal-binding</keyword>
<keyword id="KW-0540">Nuclease</keyword>
<feature type="chain" id="PRO_1000090506" description="Crossover junction endodeoxyribonuclease RuvC">
    <location>
        <begin position="1"/>
        <end position="180"/>
    </location>
</feature>
<feature type="active site" evidence="1">
    <location>
        <position position="7"/>
    </location>
</feature>
<feature type="active site" evidence="1">
    <location>
        <position position="66"/>
    </location>
</feature>
<feature type="active site" evidence="1">
    <location>
        <position position="138"/>
    </location>
</feature>
<feature type="binding site" evidence="1">
    <location>
        <position position="7"/>
    </location>
    <ligand>
        <name>Mg(2+)</name>
        <dbReference type="ChEBI" id="CHEBI:18420"/>
        <label>1</label>
    </ligand>
</feature>
<feature type="binding site" evidence="1">
    <location>
        <position position="66"/>
    </location>
    <ligand>
        <name>Mg(2+)</name>
        <dbReference type="ChEBI" id="CHEBI:18420"/>
        <label>2</label>
    </ligand>
</feature>
<feature type="binding site" evidence="1">
    <location>
        <position position="138"/>
    </location>
    <ligand>
        <name>Mg(2+)</name>
        <dbReference type="ChEBI" id="CHEBI:18420"/>
        <label>1</label>
    </ligand>
</feature>
<dbReference type="EC" id="3.1.21.10" evidence="1"/>
<dbReference type="EMBL" id="CP000958">
    <property type="protein sequence ID" value="ACA89835.1"/>
    <property type="molecule type" value="Genomic_DNA"/>
</dbReference>
<dbReference type="RefSeq" id="WP_012327907.1">
    <property type="nucleotide sequence ID" value="NC_010508.1"/>
</dbReference>
<dbReference type="SMR" id="B1JVV5"/>
<dbReference type="GeneID" id="83047457"/>
<dbReference type="KEGG" id="bcm:Bcenmc03_0657"/>
<dbReference type="HOGENOM" id="CLU_091257_2_0_4"/>
<dbReference type="Proteomes" id="UP000002169">
    <property type="component" value="Chromosome 1"/>
</dbReference>
<dbReference type="GO" id="GO:0005737">
    <property type="term" value="C:cytoplasm"/>
    <property type="evidence" value="ECO:0007669"/>
    <property type="project" value="UniProtKB-SubCell"/>
</dbReference>
<dbReference type="GO" id="GO:0048476">
    <property type="term" value="C:Holliday junction resolvase complex"/>
    <property type="evidence" value="ECO:0007669"/>
    <property type="project" value="UniProtKB-UniRule"/>
</dbReference>
<dbReference type="GO" id="GO:0008821">
    <property type="term" value="F:crossover junction DNA endonuclease activity"/>
    <property type="evidence" value="ECO:0007669"/>
    <property type="project" value="UniProtKB-UniRule"/>
</dbReference>
<dbReference type="GO" id="GO:0003677">
    <property type="term" value="F:DNA binding"/>
    <property type="evidence" value="ECO:0007669"/>
    <property type="project" value="UniProtKB-KW"/>
</dbReference>
<dbReference type="GO" id="GO:0000287">
    <property type="term" value="F:magnesium ion binding"/>
    <property type="evidence" value="ECO:0007669"/>
    <property type="project" value="UniProtKB-UniRule"/>
</dbReference>
<dbReference type="GO" id="GO:0006310">
    <property type="term" value="P:DNA recombination"/>
    <property type="evidence" value="ECO:0007669"/>
    <property type="project" value="UniProtKB-UniRule"/>
</dbReference>
<dbReference type="GO" id="GO:0006281">
    <property type="term" value="P:DNA repair"/>
    <property type="evidence" value="ECO:0007669"/>
    <property type="project" value="UniProtKB-UniRule"/>
</dbReference>
<dbReference type="CDD" id="cd16962">
    <property type="entry name" value="RuvC"/>
    <property type="match status" value="1"/>
</dbReference>
<dbReference type="FunFam" id="3.30.420.10:FF:000002">
    <property type="entry name" value="Crossover junction endodeoxyribonuclease RuvC"/>
    <property type="match status" value="1"/>
</dbReference>
<dbReference type="Gene3D" id="3.30.420.10">
    <property type="entry name" value="Ribonuclease H-like superfamily/Ribonuclease H"/>
    <property type="match status" value="1"/>
</dbReference>
<dbReference type="HAMAP" id="MF_00034">
    <property type="entry name" value="RuvC"/>
    <property type="match status" value="1"/>
</dbReference>
<dbReference type="InterPro" id="IPR012337">
    <property type="entry name" value="RNaseH-like_sf"/>
</dbReference>
<dbReference type="InterPro" id="IPR036397">
    <property type="entry name" value="RNaseH_sf"/>
</dbReference>
<dbReference type="InterPro" id="IPR020563">
    <property type="entry name" value="X-over_junc_endoDNase_Mg_BS"/>
</dbReference>
<dbReference type="InterPro" id="IPR002176">
    <property type="entry name" value="X-over_junc_endoDNase_RuvC"/>
</dbReference>
<dbReference type="NCBIfam" id="TIGR00228">
    <property type="entry name" value="ruvC"/>
    <property type="match status" value="1"/>
</dbReference>
<dbReference type="PANTHER" id="PTHR30194">
    <property type="entry name" value="CROSSOVER JUNCTION ENDODEOXYRIBONUCLEASE RUVC"/>
    <property type="match status" value="1"/>
</dbReference>
<dbReference type="PANTHER" id="PTHR30194:SF3">
    <property type="entry name" value="CROSSOVER JUNCTION ENDODEOXYRIBONUCLEASE RUVC"/>
    <property type="match status" value="1"/>
</dbReference>
<dbReference type="Pfam" id="PF02075">
    <property type="entry name" value="RuvC"/>
    <property type="match status" value="1"/>
</dbReference>
<dbReference type="PRINTS" id="PR00696">
    <property type="entry name" value="RSOLVASERUVC"/>
</dbReference>
<dbReference type="SUPFAM" id="SSF53098">
    <property type="entry name" value="Ribonuclease H-like"/>
    <property type="match status" value="1"/>
</dbReference>
<dbReference type="PROSITE" id="PS01321">
    <property type="entry name" value="RUVC"/>
    <property type="match status" value="1"/>
</dbReference>
<gene>
    <name evidence="1" type="primary">ruvC</name>
    <name type="ordered locus">Bcenmc03_0657</name>
</gene>
<name>RUVC_BURO0</name>
<sequence>MRILGIDPGLRVTGFGVIDVSGHRLAYVTSGVIRTPTADLATRLGTIFQGVSTIVRDHAPDQAAIEKVFVNVNPQSTLLLGQARGAAICGLVAGGLPVAEYTALQLKQAVVGYGRATKTQMQDMVTRLLNLSGQPGSDAADALGMAICHAHGGNTLSTLGGLAPALAQKGLRVRRGRLVG</sequence>
<proteinExistence type="inferred from homology"/>
<comment type="function">
    <text evidence="1">The RuvA-RuvB-RuvC complex processes Holliday junction (HJ) DNA during genetic recombination and DNA repair. Endonuclease that resolves HJ intermediates. Cleaves cruciform DNA by making single-stranded nicks across the HJ at symmetrical positions within the homologous arms, yielding a 5'-phosphate and a 3'-hydroxyl group; requires a central core of homology in the junction. The consensus cleavage sequence is 5'-(A/T)TT(C/G)-3'. Cleavage occurs on the 3'-side of the TT dinucleotide at the point of strand exchange. HJ branch migration catalyzed by RuvA-RuvB allows RuvC to scan DNA until it finds its consensus sequence, where it cleaves and resolves the cruciform DNA.</text>
</comment>
<comment type="catalytic activity">
    <reaction evidence="1">
        <text>Endonucleolytic cleavage at a junction such as a reciprocal single-stranded crossover between two homologous DNA duplexes (Holliday junction).</text>
        <dbReference type="EC" id="3.1.21.10"/>
    </reaction>
</comment>
<comment type="cofactor">
    <cofactor evidence="1">
        <name>Mg(2+)</name>
        <dbReference type="ChEBI" id="CHEBI:18420"/>
    </cofactor>
    <text evidence="1">Binds 2 Mg(2+) ion per subunit.</text>
</comment>
<comment type="subunit">
    <text evidence="1">Homodimer which binds Holliday junction (HJ) DNA. The HJ becomes 2-fold symmetrical on binding to RuvC with unstacked arms; it has a different conformation from HJ DNA in complex with RuvA. In the full resolvosome a probable DNA-RuvA(4)-RuvB(12)-RuvC(2) complex forms which resolves the HJ.</text>
</comment>
<comment type="subcellular location">
    <subcellularLocation>
        <location evidence="1">Cytoplasm</location>
    </subcellularLocation>
</comment>
<comment type="similarity">
    <text evidence="1">Belongs to the RuvC family.</text>
</comment>
<organism>
    <name type="scientific">Burkholderia orbicola (strain MC0-3)</name>
    <dbReference type="NCBI Taxonomy" id="406425"/>
    <lineage>
        <taxon>Bacteria</taxon>
        <taxon>Pseudomonadati</taxon>
        <taxon>Pseudomonadota</taxon>
        <taxon>Betaproteobacteria</taxon>
        <taxon>Burkholderiales</taxon>
        <taxon>Burkholderiaceae</taxon>
        <taxon>Burkholderia</taxon>
        <taxon>Burkholderia cepacia complex</taxon>
        <taxon>Burkholderia orbicola</taxon>
    </lineage>
</organism>
<accession>B1JVV5</accession>